<sequence length="508" mass="56660">MDATMQTTKHEYQFEGAAECGYPPGRTGLSPAAQLPGAAAAHSLDMQPYSHLDDSLFKPPTPGSAPPTASTCAGVPSSAPRRRPRRLRPPAPLHYDDYAPPPPYSHDHHHHLEQGGGGNGAASRCTAVRLQQRRAILHQRSRPLRPAAALDRVRRVSELRQQRDTGGRIRRERAEGWGSPCRLSTRGSAAPSPAPAGARSAVAGRIFRVVNDIYAAMGIHNMFIDADLGGVITPGFGLGKVKGGRQAGVELTFMRTVELAEFFTEGRECVNCGAIHTPLWHRDGTGHYLCNACGLYNKMNGMNRPLKQPRRLMAAKRPGTMCTNCQTTATSLWRRNVQGETVCNACGLYFKLHNVNRPLTMKKDSIQTRKRKPKNSNIKADRSAKAVQRASPRASRWRAYWMRRRSPPRLGYYVQSAEGMKLEEPQHHVMYIGVPELGPDTRTRRTTTTPPCRSPAETSRPTPNIIIIISTFVVYICTCVIELPRSDRRRRRRRRSPPKYTFTRHDYI</sequence>
<reference key="1">
    <citation type="journal article" date="1994" name="J. Biol. Chem.">
        <title>GATA-type zinc finger motif-containing sequences and chorion gene transcription factors of the silkworm Bombyx mori.</title>
        <authorList>
            <person name="Drevet J.R."/>
            <person name="Skeiky Y.A."/>
            <person name="Iatrou K."/>
        </authorList>
    </citation>
    <scope>NUCLEOTIDE SEQUENCE [MRNA]</scope>
    <source>
        <tissue>Ovary</tissue>
    </source>
</reference>
<reference key="2">
    <citation type="journal article" date="1995" name="J. Mol. Biol.">
        <title>Developmental regulation of a silkworm gene encoding multiple GATA-type transcription factors by alternative splicing.</title>
        <authorList>
            <person name="Drevet J.R."/>
            <person name="Swevers L."/>
            <person name="Iatrou K."/>
        </authorList>
    </citation>
    <scope>NUCLEOTIDE SEQUENCE [GENOMIC DNA / MRNA] OF 196-508</scope>
    <scope>ALTERNATIVE SPLICING</scope>
    <source>
        <strain>703</strain>
    </source>
</reference>
<feature type="chain" id="PRO_0000083459" description="Transcription factor BCFI">
    <location>
        <begin position="1"/>
        <end position="508"/>
    </location>
</feature>
<feature type="zinc finger region" description="GATA-type 1" evidence="1">
    <location>
        <begin position="269"/>
        <end position="293"/>
    </location>
</feature>
<feature type="zinc finger region" description="GATA-type 2" evidence="1">
    <location>
        <begin position="322"/>
        <end position="346"/>
    </location>
</feature>
<feature type="region of interest" description="Disordered" evidence="2">
    <location>
        <begin position="50"/>
        <end position="122"/>
    </location>
</feature>
<feature type="region of interest" description="Disordered" evidence="2">
    <location>
        <begin position="178"/>
        <end position="197"/>
    </location>
</feature>
<feature type="region of interest" description="Disordered" evidence="2">
    <location>
        <begin position="364"/>
        <end position="389"/>
    </location>
</feature>
<feature type="region of interest" description="Disordered" evidence="2">
    <location>
        <begin position="436"/>
        <end position="460"/>
    </location>
</feature>
<feature type="region of interest" description="Disordered" evidence="2">
    <location>
        <begin position="487"/>
        <end position="508"/>
    </location>
</feature>
<feature type="compositionally biased region" description="Low complexity" evidence="2">
    <location>
        <begin position="66"/>
        <end position="79"/>
    </location>
</feature>
<feature type="compositionally biased region" description="Low complexity" evidence="2">
    <location>
        <begin position="186"/>
        <end position="197"/>
    </location>
</feature>
<feature type="compositionally biased region" description="Basic residues" evidence="2">
    <location>
        <begin position="487"/>
        <end position="497"/>
    </location>
</feature>
<feature type="splice variant" id="VSP_001600" description="In isoform 3." evidence="3">
    <original>AGARSAVAGRIFRVVNDIYAAMGIHNMFIDADLGGVITPGFGLGKVKGGRQAGVELTFMRTVELAEFFTEGRECVNCGAIHTPLWHRDGTGHYLCNACGLYNKMNGMNRPLKQPRRL</original>
    <variation>TRGPPPSTERQLWPPTRTHTRGGAWSATAGRSSPQPTDSLQWPRRGPSGADFYKGFLLNGIQASHALPAPQRTRVPILLTTSRRKG</variation>
    <location>
        <begin position="196"/>
        <end position="312"/>
    </location>
</feature>
<feature type="splice variant" id="VSP_001599" description="In isoform 2." evidence="3">
    <original>L</original>
    <variation>LVRQRHAALAAPPHD</variation>
    <location>
        <position position="312"/>
    </location>
</feature>
<feature type="sequence conflict" description="In Ref. 2; AAC13781." evidence="3" ref="2">
    <original>A</original>
    <variation>G</variation>
    <location>
        <position position="314"/>
    </location>
</feature>
<feature type="sequence conflict" description="In Ref. 1; AAA65734 and 2; AAC13781." evidence="3" ref="1 2">
    <original>R</original>
    <variation>RR</variation>
    <location>
        <position position="445"/>
    </location>
</feature>
<comment type="function">
    <text>Regulates the expression of chorion genes through binding to gene promoter elements identical to those recognized by the GATA family of transcription factors. Isoform 1 may act as a gonad-specific trans-activator while isoform 2 and isoform 3 may serve as ubiquitous transcriptional modulators.</text>
</comment>
<comment type="subcellular location">
    <subcellularLocation>
        <location>Nucleus</location>
    </subcellularLocation>
</comment>
<comment type="alternative products">
    <event type="alternative splicing"/>
    <isoform>
        <id>P52167-1</id>
        <name>1</name>
        <sequence type="displayed"/>
    </isoform>
    <isoform>
        <id>P52167-2</id>
        <name>2</name>
        <sequence type="described" ref="VSP_001599"/>
    </isoform>
    <isoform>
        <id>P52167-3</id>
        <name>3</name>
        <sequence type="described" ref="VSP_001600"/>
    </isoform>
</comment>
<comment type="tissue specificity">
    <text>Isoform 1 is present in the ovary and the testis, isoform 2 is found in the larval and pupal tissues, while isoform 3 is found only in some pupal tissues.</text>
</comment>
<comment type="developmental stage">
    <text>First appears in follicular cells at late vitellogenic stages that is approximately 12 hours prior to the onset of choriogenesis, its accumulation declines at the onset of choriogenesis and is present at lower levels throughout choriogenesis.</text>
</comment>
<gene>
    <name type="primary">GATA-B</name>
</gene>
<name>GATAB_BOMMO</name>
<accession>P52167</accession>
<keyword id="KW-0010">Activator</keyword>
<keyword id="KW-0025">Alternative splicing</keyword>
<keyword id="KW-0238">DNA-binding</keyword>
<keyword id="KW-0479">Metal-binding</keyword>
<keyword id="KW-0539">Nucleus</keyword>
<keyword id="KW-1185">Reference proteome</keyword>
<keyword id="KW-0677">Repeat</keyword>
<keyword id="KW-0804">Transcription</keyword>
<keyword id="KW-0805">Transcription regulation</keyword>
<keyword id="KW-0862">Zinc</keyword>
<keyword id="KW-0863">Zinc-finger</keyword>
<evidence type="ECO:0000255" key="1">
    <source>
        <dbReference type="PROSITE-ProRule" id="PRU00094"/>
    </source>
</evidence>
<evidence type="ECO:0000256" key="2">
    <source>
        <dbReference type="SAM" id="MobiDB-lite"/>
    </source>
</evidence>
<evidence type="ECO:0000305" key="3"/>
<protein>
    <recommendedName>
        <fullName>Transcription factor BCFI</fullName>
    </recommendedName>
    <alternativeName>
        <fullName>BmGATA-beta</fullName>
        <shortName>GATA-beta</shortName>
    </alternativeName>
</protein>
<proteinExistence type="evidence at transcript level"/>
<dbReference type="EMBL" id="L27451">
    <property type="protein sequence ID" value="AAA65734.1"/>
    <property type="molecule type" value="mRNA"/>
</dbReference>
<dbReference type="EMBL" id="U16320">
    <property type="protein sequence ID" value="AAA67886.1"/>
    <property type="molecule type" value="Genomic_DNA"/>
</dbReference>
<dbReference type="EMBL" id="U16320">
    <property type="protein sequence ID" value="AAA67885.1"/>
    <property type="molecule type" value="Genomic_DNA"/>
</dbReference>
<dbReference type="EMBL" id="U16274">
    <property type="protein sequence ID" value="AAC13781.1"/>
    <property type="molecule type" value="mRNA"/>
</dbReference>
<dbReference type="EMBL" id="U16320">
    <property type="protein sequence ID" value="AAA67887.1"/>
    <property type="molecule type" value="Genomic_DNA"/>
</dbReference>
<dbReference type="PIR" id="A53741">
    <property type="entry name" value="A53741"/>
</dbReference>
<dbReference type="RefSeq" id="NP_001037446.1">
    <property type="nucleotide sequence ID" value="NM_001043981.1"/>
</dbReference>
<dbReference type="SMR" id="P52167"/>
<dbReference type="STRING" id="7091.P52167"/>
<dbReference type="GeneID" id="693014"/>
<dbReference type="KEGG" id="bmor:693014"/>
<dbReference type="CTD" id="693014"/>
<dbReference type="eggNOG" id="KOG1601">
    <property type="taxonomic scope" value="Eukaryota"/>
</dbReference>
<dbReference type="InParanoid" id="P52167"/>
<dbReference type="OrthoDB" id="576772at7088"/>
<dbReference type="Proteomes" id="UP000005204">
    <property type="component" value="Unassembled WGS sequence"/>
</dbReference>
<dbReference type="GO" id="GO:0005634">
    <property type="term" value="C:nucleus"/>
    <property type="evidence" value="ECO:0007669"/>
    <property type="project" value="UniProtKB-SubCell"/>
</dbReference>
<dbReference type="GO" id="GO:0000981">
    <property type="term" value="F:DNA-binding transcription factor activity, RNA polymerase II-specific"/>
    <property type="evidence" value="ECO:0007669"/>
    <property type="project" value="TreeGrafter"/>
</dbReference>
<dbReference type="GO" id="GO:0000978">
    <property type="term" value="F:RNA polymerase II cis-regulatory region sequence-specific DNA binding"/>
    <property type="evidence" value="ECO:0007669"/>
    <property type="project" value="TreeGrafter"/>
</dbReference>
<dbReference type="GO" id="GO:0008270">
    <property type="term" value="F:zinc ion binding"/>
    <property type="evidence" value="ECO:0007669"/>
    <property type="project" value="UniProtKB-KW"/>
</dbReference>
<dbReference type="GO" id="GO:0045165">
    <property type="term" value="P:cell fate commitment"/>
    <property type="evidence" value="ECO:0007669"/>
    <property type="project" value="TreeGrafter"/>
</dbReference>
<dbReference type="GO" id="GO:0000122">
    <property type="term" value="P:negative regulation of transcription by RNA polymerase II"/>
    <property type="evidence" value="ECO:0007669"/>
    <property type="project" value="TreeGrafter"/>
</dbReference>
<dbReference type="GO" id="GO:0045944">
    <property type="term" value="P:positive regulation of transcription by RNA polymerase II"/>
    <property type="evidence" value="ECO:0007669"/>
    <property type="project" value="TreeGrafter"/>
</dbReference>
<dbReference type="CDD" id="cd00202">
    <property type="entry name" value="ZnF_GATA"/>
    <property type="match status" value="2"/>
</dbReference>
<dbReference type="FunFam" id="3.30.50.10:FF:000001">
    <property type="entry name" value="GATA transcription factor (GATAd)"/>
    <property type="match status" value="1"/>
</dbReference>
<dbReference type="FunFam" id="3.30.50.10:FF:000032">
    <property type="entry name" value="Transcription factor GATA-3"/>
    <property type="match status" value="1"/>
</dbReference>
<dbReference type="Gene3D" id="3.30.50.10">
    <property type="entry name" value="Erythroid Transcription Factor GATA-1, subunit A"/>
    <property type="match status" value="2"/>
</dbReference>
<dbReference type="InterPro" id="IPR039355">
    <property type="entry name" value="Transcription_factor_GATA"/>
</dbReference>
<dbReference type="InterPro" id="IPR000679">
    <property type="entry name" value="Znf_GATA"/>
</dbReference>
<dbReference type="InterPro" id="IPR013088">
    <property type="entry name" value="Znf_NHR/GATA"/>
</dbReference>
<dbReference type="PANTHER" id="PTHR10071:SF337">
    <property type="entry name" value="GATA-BINDING FACTOR A"/>
    <property type="match status" value="1"/>
</dbReference>
<dbReference type="PANTHER" id="PTHR10071">
    <property type="entry name" value="TRANSCRIPTION FACTOR GATA FAMILY MEMBER"/>
    <property type="match status" value="1"/>
</dbReference>
<dbReference type="Pfam" id="PF00320">
    <property type="entry name" value="GATA"/>
    <property type="match status" value="2"/>
</dbReference>
<dbReference type="PRINTS" id="PR00619">
    <property type="entry name" value="GATAZNFINGER"/>
</dbReference>
<dbReference type="SMART" id="SM00401">
    <property type="entry name" value="ZnF_GATA"/>
    <property type="match status" value="2"/>
</dbReference>
<dbReference type="SUPFAM" id="SSF57716">
    <property type="entry name" value="Glucocorticoid receptor-like (DNA-binding domain)"/>
    <property type="match status" value="2"/>
</dbReference>
<dbReference type="PROSITE" id="PS00344">
    <property type="entry name" value="GATA_ZN_FINGER_1"/>
    <property type="match status" value="2"/>
</dbReference>
<dbReference type="PROSITE" id="PS50114">
    <property type="entry name" value="GATA_ZN_FINGER_2"/>
    <property type="match status" value="2"/>
</dbReference>
<organism>
    <name type="scientific">Bombyx mori</name>
    <name type="common">Silk moth</name>
    <dbReference type="NCBI Taxonomy" id="7091"/>
    <lineage>
        <taxon>Eukaryota</taxon>
        <taxon>Metazoa</taxon>
        <taxon>Ecdysozoa</taxon>
        <taxon>Arthropoda</taxon>
        <taxon>Hexapoda</taxon>
        <taxon>Insecta</taxon>
        <taxon>Pterygota</taxon>
        <taxon>Neoptera</taxon>
        <taxon>Endopterygota</taxon>
        <taxon>Lepidoptera</taxon>
        <taxon>Glossata</taxon>
        <taxon>Ditrysia</taxon>
        <taxon>Bombycoidea</taxon>
        <taxon>Bombycidae</taxon>
        <taxon>Bombycinae</taxon>
        <taxon>Bombyx</taxon>
    </lineage>
</organism>